<evidence type="ECO:0000255" key="1">
    <source>
        <dbReference type="HAMAP-Rule" id="MF_01629"/>
    </source>
</evidence>
<feature type="chain" id="PRO_0000335799" description="Pyridoxine/pyridoxamine 5'-phosphate oxidase">
    <location>
        <begin position="1"/>
        <end position="212"/>
    </location>
</feature>
<feature type="binding site" evidence="1">
    <location>
        <begin position="8"/>
        <end position="11"/>
    </location>
    <ligand>
        <name>substrate</name>
    </ligand>
</feature>
<feature type="binding site" evidence="1">
    <location>
        <begin position="61"/>
        <end position="66"/>
    </location>
    <ligand>
        <name>FMN</name>
        <dbReference type="ChEBI" id="CHEBI:58210"/>
    </ligand>
</feature>
<feature type="binding site" evidence="1">
    <location>
        <position position="66"/>
    </location>
    <ligand>
        <name>substrate</name>
    </ligand>
</feature>
<feature type="binding site" evidence="1">
    <location>
        <begin position="76"/>
        <end position="77"/>
    </location>
    <ligand>
        <name>FMN</name>
        <dbReference type="ChEBI" id="CHEBI:58210"/>
    </ligand>
</feature>
<feature type="binding site" evidence="1">
    <location>
        <position position="82"/>
    </location>
    <ligand>
        <name>FMN</name>
        <dbReference type="ChEBI" id="CHEBI:58210"/>
    </ligand>
</feature>
<feature type="binding site" evidence="1">
    <location>
        <position position="83"/>
    </location>
    <ligand>
        <name>FMN</name>
        <dbReference type="ChEBI" id="CHEBI:58210"/>
    </ligand>
</feature>
<feature type="binding site" evidence="1">
    <location>
        <position position="105"/>
    </location>
    <ligand>
        <name>FMN</name>
        <dbReference type="ChEBI" id="CHEBI:58210"/>
    </ligand>
</feature>
<feature type="binding site" evidence="1">
    <location>
        <position position="123"/>
    </location>
    <ligand>
        <name>substrate</name>
    </ligand>
</feature>
<feature type="binding site" evidence="1">
    <location>
        <position position="127"/>
    </location>
    <ligand>
        <name>substrate</name>
    </ligand>
</feature>
<feature type="binding site" evidence="1">
    <location>
        <position position="131"/>
    </location>
    <ligand>
        <name>substrate</name>
    </ligand>
</feature>
<feature type="binding site" evidence="1">
    <location>
        <begin position="140"/>
        <end position="141"/>
    </location>
    <ligand>
        <name>FMN</name>
        <dbReference type="ChEBI" id="CHEBI:58210"/>
    </ligand>
</feature>
<feature type="binding site" evidence="1">
    <location>
        <position position="185"/>
    </location>
    <ligand>
        <name>FMN</name>
        <dbReference type="ChEBI" id="CHEBI:58210"/>
    </ligand>
</feature>
<feature type="binding site" evidence="1">
    <location>
        <begin position="191"/>
        <end position="193"/>
    </location>
    <ligand>
        <name>substrate</name>
    </ligand>
</feature>
<feature type="binding site" evidence="1">
    <location>
        <position position="195"/>
    </location>
    <ligand>
        <name>FMN</name>
        <dbReference type="ChEBI" id="CHEBI:58210"/>
    </ligand>
</feature>
<sequence>MTDLSDIRREYAKGGLRRADLPQNPMDLFELWMTQARDAELSDPTAMCVATVDEHGQPFQRIVLLKRFDDTGFVFFTNLGSRKAQQIAANNKVSLHFPWHPLERQVSVLGEAQALSTAEVLKYFMTRPKDSQIAAWVSQQSSKLSARQVLEGKFFEMKAKFAKGDVPLPSFWGGYLVRPSSIEFWQGGEHRLHDRFIYTRHDAEWEIDRLAP</sequence>
<reference key="1">
    <citation type="submission" date="2007-11" db="EMBL/GenBank/DDBJ databases">
        <title>Complete sequence of chromosome of Shewanella baltica OS195.</title>
        <authorList>
            <consortium name="US DOE Joint Genome Institute"/>
            <person name="Copeland A."/>
            <person name="Lucas S."/>
            <person name="Lapidus A."/>
            <person name="Barry K."/>
            <person name="Glavina del Rio T."/>
            <person name="Dalin E."/>
            <person name="Tice H."/>
            <person name="Pitluck S."/>
            <person name="Chain P."/>
            <person name="Malfatti S."/>
            <person name="Shin M."/>
            <person name="Vergez L."/>
            <person name="Schmutz J."/>
            <person name="Larimer F."/>
            <person name="Land M."/>
            <person name="Hauser L."/>
            <person name="Kyrpides N."/>
            <person name="Kim E."/>
            <person name="Brettar I."/>
            <person name="Rodrigues J."/>
            <person name="Konstantinidis K."/>
            <person name="Klappenbach J."/>
            <person name="Hofle M."/>
            <person name="Tiedje J."/>
            <person name="Richardson P."/>
        </authorList>
    </citation>
    <scope>NUCLEOTIDE SEQUENCE [LARGE SCALE GENOMIC DNA]</scope>
    <source>
        <strain>OS195</strain>
    </source>
</reference>
<dbReference type="EC" id="1.4.3.5" evidence="1"/>
<dbReference type="EMBL" id="CP000891">
    <property type="protein sequence ID" value="ABX48978.1"/>
    <property type="molecule type" value="Genomic_DNA"/>
</dbReference>
<dbReference type="RefSeq" id="WP_006081276.1">
    <property type="nucleotide sequence ID" value="NC_009997.1"/>
</dbReference>
<dbReference type="SMR" id="A9KY72"/>
<dbReference type="GeneID" id="11772029"/>
<dbReference type="KEGG" id="sbn:Sbal195_1807"/>
<dbReference type="HOGENOM" id="CLU_032263_2_2_6"/>
<dbReference type="UniPathway" id="UPA01068">
    <property type="reaction ID" value="UER00304"/>
</dbReference>
<dbReference type="UniPathway" id="UPA01068">
    <property type="reaction ID" value="UER00305"/>
</dbReference>
<dbReference type="Proteomes" id="UP000000770">
    <property type="component" value="Chromosome"/>
</dbReference>
<dbReference type="GO" id="GO:0010181">
    <property type="term" value="F:FMN binding"/>
    <property type="evidence" value="ECO:0007669"/>
    <property type="project" value="UniProtKB-UniRule"/>
</dbReference>
<dbReference type="GO" id="GO:0004733">
    <property type="term" value="F:pyridoxamine phosphate oxidase activity"/>
    <property type="evidence" value="ECO:0007669"/>
    <property type="project" value="UniProtKB-UniRule"/>
</dbReference>
<dbReference type="GO" id="GO:0008615">
    <property type="term" value="P:pyridoxine biosynthetic process"/>
    <property type="evidence" value="ECO:0007669"/>
    <property type="project" value="UniProtKB-KW"/>
</dbReference>
<dbReference type="FunFam" id="2.30.110.10:FF:000001">
    <property type="entry name" value="Pyridoxine/pyridoxamine 5'-phosphate oxidase"/>
    <property type="match status" value="1"/>
</dbReference>
<dbReference type="Gene3D" id="2.30.110.10">
    <property type="entry name" value="Electron Transport, Fmn-binding Protein, Chain A"/>
    <property type="match status" value="1"/>
</dbReference>
<dbReference type="HAMAP" id="MF_01629">
    <property type="entry name" value="PdxH"/>
    <property type="match status" value="1"/>
</dbReference>
<dbReference type="InterPro" id="IPR000659">
    <property type="entry name" value="Pyridox_Oxase"/>
</dbReference>
<dbReference type="InterPro" id="IPR019740">
    <property type="entry name" value="Pyridox_Oxase_CS"/>
</dbReference>
<dbReference type="InterPro" id="IPR011576">
    <property type="entry name" value="Pyridox_Oxase_N"/>
</dbReference>
<dbReference type="InterPro" id="IPR019576">
    <property type="entry name" value="Pyridoxamine_oxidase_dimer_C"/>
</dbReference>
<dbReference type="InterPro" id="IPR012349">
    <property type="entry name" value="Split_barrel_FMN-bd"/>
</dbReference>
<dbReference type="NCBIfam" id="TIGR00558">
    <property type="entry name" value="pdxH"/>
    <property type="match status" value="1"/>
</dbReference>
<dbReference type="NCBIfam" id="NF004231">
    <property type="entry name" value="PRK05679.1"/>
    <property type="match status" value="1"/>
</dbReference>
<dbReference type="PANTHER" id="PTHR10851:SF0">
    <property type="entry name" value="PYRIDOXINE-5'-PHOSPHATE OXIDASE"/>
    <property type="match status" value="1"/>
</dbReference>
<dbReference type="PANTHER" id="PTHR10851">
    <property type="entry name" value="PYRIDOXINE-5-PHOSPHATE OXIDASE"/>
    <property type="match status" value="1"/>
</dbReference>
<dbReference type="Pfam" id="PF10590">
    <property type="entry name" value="PNP_phzG_C"/>
    <property type="match status" value="1"/>
</dbReference>
<dbReference type="Pfam" id="PF01243">
    <property type="entry name" value="PNPOx_N"/>
    <property type="match status" value="1"/>
</dbReference>
<dbReference type="PIRSF" id="PIRSF000190">
    <property type="entry name" value="Pyd_amn-ph_oxd"/>
    <property type="match status" value="1"/>
</dbReference>
<dbReference type="SUPFAM" id="SSF50475">
    <property type="entry name" value="FMN-binding split barrel"/>
    <property type="match status" value="1"/>
</dbReference>
<dbReference type="PROSITE" id="PS01064">
    <property type="entry name" value="PYRIDOX_OXIDASE"/>
    <property type="match status" value="1"/>
</dbReference>
<name>PDXH_SHEB9</name>
<proteinExistence type="inferred from homology"/>
<protein>
    <recommendedName>
        <fullName evidence="1">Pyridoxine/pyridoxamine 5'-phosphate oxidase</fullName>
        <ecNumber evidence="1">1.4.3.5</ecNumber>
    </recommendedName>
    <alternativeName>
        <fullName evidence="1">PNP/PMP oxidase</fullName>
        <shortName evidence="1">PNPOx</shortName>
    </alternativeName>
    <alternativeName>
        <fullName evidence="1">Pyridoxal 5'-phosphate synthase</fullName>
    </alternativeName>
</protein>
<comment type="function">
    <text evidence="1">Catalyzes the oxidation of either pyridoxine 5'-phosphate (PNP) or pyridoxamine 5'-phosphate (PMP) into pyridoxal 5'-phosphate (PLP).</text>
</comment>
<comment type="catalytic activity">
    <reaction evidence="1">
        <text>pyridoxamine 5'-phosphate + O2 + H2O = pyridoxal 5'-phosphate + H2O2 + NH4(+)</text>
        <dbReference type="Rhea" id="RHEA:15817"/>
        <dbReference type="ChEBI" id="CHEBI:15377"/>
        <dbReference type="ChEBI" id="CHEBI:15379"/>
        <dbReference type="ChEBI" id="CHEBI:16240"/>
        <dbReference type="ChEBI" id="CHEBI:28938"/>
        <dbReference type="ChEBI" id="CHEBI:58451"/>
        <dbReference type="ChEBI" id="CHEBI:597326"/>
        <dbReference type="EC" id="1.4.3.5"/>
    </reaction>
</comment>
<comment type="catalytic activity">
    <reaction evidence="1">
        <text>pyridoxine 5'-phosphate + O2 = pyridoxal 5'-phosphate + H2O2</text>
        <dbReference type="Rhea" id="RHEA:15149"/>
        <dbReference type="ChEBI" id="CHEBI:15379"/>
        <dbReference type="ChEBI" id="CHEBI:16240"/>
        <dbReference type="ChEBI" id="CHEBI:58589"/>
        <dbReference type="ChEBI" id="CHEBI:597326"/>
        <dbReference type="EC" id="1.4.3.5"/>
    </reaction>
</comment>
<comment type="cofactor">
    <cofactor evidence="1">
        <name>FMN</name>
        <dbReference type="ChEBI" id="CHEBI:58210"/>
    </cofactor>
    <text evidence="1">Binds 1 FMN per subunit.</text>
</comment>
<comment type="pathway">
    <text evidence="1">Cofactor metabolism; pyridoxal 5'-phosphate salvage; pyridoxal 5'-phosphate from pyridoxamine 5'-phosphate: step 1/1.</text>
</comment>
<comment type="pathway">
    <text evidence="1">Cofactor metabolism; pyridoxal 5'-phosphate salvage; pyridoxal 5'-phosphate from pyridoxine 5'-phosphate: step 1/1.</text>
</comment>
<comment type="subunit">
    <text evidence="1">Homodimer.</text>
</comment>
<comment type="similarity">
    <text evidence="1">Belongs to the pyridoxamine 5'-phosphate oxidase family.</text>
</comment>
<organism>
    <name type="scientific">Shewanella baltica (strain OS195)</name>
    <dbReference type="NCBI Taxonomy" id="399599"/>
    <lineage>
        <taxon>Bacteria</taxon>
        <taxon>Pseudomonadati</taxon>
        <taxon>Pseudomonadota</taxon>
        <taxon>Gammaproteobacteria</taxon>
        <taxon>Alteromonadales</taxon>
        <taxon>Shewanellaceae</taxon>
        <taxon>Shewanella</taxon>
    </lineage>
</organism>
<gene>
    <name evidence="1" type="primary">pdxH</name>
    <name type="ordered locus">Sbal195_1807</name>
</gene>
<keyword id="KW-0285">Flavoprotein</keyword>
<keyword id="KW-0288">FMN</keyword>
<keyword id="KW-0560">Oxidoreductase</keyword>
<keyword id="KW-0664">Pyridoxine biosynthesis</keyword>
<accession>A9KY72</accession>